<dbReference type="EC" id="1.8.-.-"/>
<dbReference type="EMBL" id="CP001857">
    <property type="protein sequence ID" value="ADB58601.1"/>
    <property type="molecule type" value="Genomic_DNA"/>
</dbReference>
<dbReference type="RefSeq" id="WP_012940937.1">
    <property type="nucleotide sequence ID" value="NC_013741.1"/>
</dbReference>
<dbReference type="SMR" id="P84626"/>
<dbReference type="STRING" id="572546.Arcpr_1555"/>
<dbReference type="PaxDb" id="572546-Arcpr_1555"/>
<dbReference type="GeneID" id="8740245"/>
<dbReference type="KEGG" id="apo:Arcpr_1555"/>
<dbReference type="eggNOG" id="arCOG02235">
    <property type="taxonomic scope" value="Archaea"/>
</dbReference>
<dbReference type="HOGENOM" id="CLU_020302_0_0_2"/>
<dbReference type="OrthoDB" id="32867at2157"/>
<dbReference type="Proteomes" id="UP000001901">
    <property type="component" value="Chromosome"/>
</dbReference>
<dbReference type="GO" id="GO:0005737">
    <property type="term" value="C:cytoplasm"/>
    <property type="evidence" value="ECO:0007669"/>
    <property type="project" value="UniProtKB-SubCell"/>
</dbReference>
<dbReference type="GO" id="GO:0051539">
    <property type="term" value="F:4 iron, 4 sulfur cluster binding"/>
    <property type="evidence" value="ECO:0007669"/>
    <property type="project" value="UniProtKB-KW"/>
</dbReference>
<dbReference type="GO" id="GO:0046872">
    <property type="term" value="F:metal ion binding"/>
    <property type="evidence" value="ECO:0007669"/>
    <property type="project" value="UniProtKB-KW"/>
</dbReference>
<dbReference type="GO" id="GO:0016491">
    <property type="term" value="F:oxidoreductase activity"/>
    <property type="evidence" value="ECO:0007669"/>
    <property type="project" value="UniProtKB-KW"/>
</dbReference>
<dbReference type="Gene3D" id="3.30.70.20">
    <property type="match status" value="2"/>
</dbReference>
<dbReference type="Gene3D" id="3.40.50.720">
    <property type="entry name" value="NAD(P)-binding Rossmann-like Domain"/>
    <property type="match status" value="1"/>
</dbReference>
<dbReference type="InterPro" id="IPR017896">
    <property type="entry name" value="4Fe4S_Fe-S-bd"/>
</dbReference>
<dbReference type="InterPro" id="IPR017900">
    <property type="entry name" value="4Fe4S_Fe_S_CS"/>
</dbReference>
<dbReference type="InterPro" id="IPR036188">
    <property type="entry name" value="FAD/NAD-bd_sf"/>
</dbReference>
<dbReference type="InterPro" id="IPR039650">
    <property type="entry name" value="HdrA-like"/>
</dbReference>
<dbReference type="PANTHER" id="PTHR43498:SF1">
    <property type="entry name" value="COB--COM HETERODISULFIDE REDUCTASE IRON-SULFUR SUBUNIT A"/>
    <property type="match status" value="1"/>
</dbReference>
<dbReference type="PANTHER" id="PTHR43498">
    <property type="entry name" value="FERREDOXIN:COB-COM HETERODISULFIDE REDUCTASE SUBUNIT A"/>
    <property type="match status" value="1"/>
</dbReference>
<dbReference type="Pfam" id="PF12831">
    <property type="entry name" value="FAD_oxidored"/>
    <property type="match status" value="1"/>
</dbReference>
<dbReference type="Pfam" id="PF12838">
    <property type="entry name" value="Fer4_7"/>
    <property type="match status" value="2"/>
</dbReference>
<dbReference type="SUPFAM" id="SSF54862">
    <property type="entry name" value="4Fe-4S ferredoxins"/>
    <property type="match status" value="1"/>
</dbReference>
<dbReference type="SUPFAM" id="SSF51905">
    <property type="entry name" value="FAD/NAD(P)-binding domain"/>
    <property type="match status" value="1"/>
</dbReference>
<dbReference type="PROSITE" id="PS00198">
    <property type="entry name" value="4FE4S_FER_1"/>
    <property type="match status" value="3"/>
</dbReference>
<dbReference type="PROSITE" id="PS51379">
    <property type="entry name" value="4FE4S_FER_2"/>
    <property type="match status" value="3"/>
</dbReference>
<proteinExistence type="evidence at protein level"/>
<organism>
    <name type="scientific">Archaeoglobus profundus (strain DSM 5631 / JCM 9629 / NBRC 100127 / Av18)</name>
    <dbReference type="NCBI Taxonomy" id="572546"/>
    <lineage>
        <taxon>Archaea</taxon>
        <taxon>Methanobacteriati</taxon>
        <taxon>Methanobacteriota</taxon>
        <taxon>Archaeoglobi</taxon>
        <taxon>Archaeoglobales</taxon>
        <taxon>Archaeoglobaceae</taxon>
        <taxon>Archaeoglobus</taxon>
    </lineage>
</organism>
<name>HDLA_ARCPA</name>
<reference key="1">
    <citation type="journal article" date="2010" name="Stand. Genomic Sci.">
        <title>Complete genome sequence of Archaeoglobus profundus type strain (AV18).</title>
        <authorList>
            <person name="von Jan M."/>
            <person name="Lapidus A."/>
            <person name="Del Rio T.G."/>
            <person name="Copeland A."/>
            <person name="Tice H."/>
            <person name="Cheng J.F."/>
            <person name="Lucas S."/>
            <person name="Chen F."/>
            <person name="Nolan M."/>
            <person name="Goodwin L."/>
            <person name="Han C."/>
            <person name="Pitluck S."/>
            <person name="Liolios K."/>
            <person name="Ivanova N."/>
            <person name="Mavromatis K."/>
            <person name="Ovchinnikova G."/>
            <person name="Chertkov O."/>
            <person name="Pati A."/>
            <person name="Chen A."/>
            <person name="Palaniappan K."/>
            <person name="Land M."/>
            <person name="Hauser L."/>
            <person name="Chang Y.J."/>
            <person name="Jeffries C.D."/>
            <person name="Saunders E."/>
            <person name="Brettin T."/>
            <person name="Detter J.C."/>
            <person name="Chain P."/>
            <person name="Eichinger K."/>
            <person name="Huber H."/>
            <person name="Spring S."/>
            <person name="Rohde M."/>
            <person name="Goker M."/>
            <person name="Wirth R."/>
            <person name="Woyke T."/>
            <person name="Bristow J."/>
            <person name="Eisen J.A."/>
            <person name="Markowitz V."/>
            <person name="Hugenholtz P."/>
            <person name="Kyrpides N.C."/>
            <person name="Klenk H.P."/>
        </authorList>
    </citation>
    <scope>NUCLEOTIDE SEQUENCE [LARGE SCALE GENOMIC DNA]</scope>
    <source>
        <strain>DSM 5631 / JCM 9629 / NBRC 100127 / Av18</strain>
    </source>
</reference>
<reference evidence="4" key="2">
    <citation type="journal article" date="2004" name="Eur. J. Biochem.">
        <title>Two distinct heterodisulfide reductase-like enzymes in the sulfate-reducing archaeon Archaeoglobus profundus.</title>
        <authorList>
            <person name="Mander G.J."/>
            <person name="Pierik A.J."/>
            <person name="Huber H."/>
            <person name="Hedderich R."/>
        </authorList>
    </citation>
    <scope>PROTEIN SEQUENCE OF 2-14</scope>
    <scope>FUNCTION</scope>
    <scope>COFACTOR</scope>
    <scope>SUBUNIT</scope>
    <scope>SUBCELLULAR LOCATION</scope>
</reference>
<gene>
    <name type="primary">hdlA</name>
    <name type="ordered locus">Arcpr_1555</name>
</gene>
<evidence type="ECO:0000255" key="1"/>
<evidence type="ECO:0000255" key="2">
    <source>
        <dbReference type="PROSITE-ProRule" id="PRU00711"/>
    </source>
</evidence>
<evidence type="ECO:0000269" key="3">
    <source>
    </source>
</evidence>
<evidence type="ECO:0000305" key="4"/>
<comment type="function">
    <text evidence="3">Has oxidoreductase activity. The Hdl and Mvh subunits may together mediate electron transfer from hydrogen to an unidentified electron acceptor on the cytoplasmic side of the membrane.</text>
</comment>
<comment type="cofactor">
    <cofactor evidence="3">
        <name>[4Fe-4S] cluster</name>
        <dbReference type="ChEBI" id="CHEBI:49883"/>
    </cofactor>
    <text evidence="3">Binds 4 [4Fe-4S] clusters per subunit.</text>
</comment>
<comment type="cofactor">
    <cofactor evidence="3">
        <name>FAD</name>
        <dbReference type="ChEBI" id="CHEBI:57692"/>
    </cofactor>
</comment>
<comment type="subunit">
    <text evidence="3">The heterodisulfide reductase is composed of three subunits; HdlA, HdlB and HdlC. It forms a complex with the F420-non-reducing hydrogenase (Mvh), which provides the reducing equivalents to the heterodisulfide reductase.</text>
</comment>
<comment type="subcellular location">
    <subcellularLocation>
        <location evidence="3">Cytoplasm</location>
    </subcellularLocation>
</comment>
<comment type="similarity">
    <text evidence="4">Belongs to the HdrA family.</text>
</comment>
<sequence>MAEEEPKIGVYICHCGENIAGAVNIEEVKKFAETLPNVVVVRDYLFMCSDPGQELIKQDIKEGRVNRVVVAACTPRTHEPIFRKACEDAGLNKYYFEMANIRDQCSWAHWHEKEKATEKAKQIIAAAVAKARLLEPLEDRYVDITQKVLVIGGGIAGIFAALDIANAGYKVYLVERNPSIGGNMAKLDKTFPTNDCSACILTPLMVEVANHPNIELLTYSEVEAVEGTVGNFKVKVRKKQTWVDWDLCTGCGACTDVCPPKARVPDEFNEGLSKRGAIYIQFPQAVPKKAVIDIDACIECGGRKFGTEPRKTKDGKPILAPCEKVCPTGAADRTKPRNPEGELIELDVGAIIVATGYKVMDKTHFKEFAPDSPNVITALQMERLISATGPTEGKLIVPSDIPKYEEWKKKVAKGEEVELEARKPHRIVYVSCVGSRDERFHTYCSKVCCMYMLKQAMLLKEKYPDLDIYIFFIDVRTPGKDFDEYYMRCRQLGIKVIKGKVGGIRRMPDERLWVRGYDAEIGKPVEVIADLVVLATAIEPSDGTIELARKLGINIGAEGFFRERHTKLYPVDTMTEGIFICGCAQGPKDIPDSVAQAKAAASSAMSLIAPGKMKLEPLVSEVDKEKCSGCGICVPLCPYGAITMTKYNESMRAEINPALCKGCGVCAAACPSKAIKLHGFTFEQVLAQVRTLAKRGIVEVL</sequence>
<keyword id="KW-0004">4Fe-4S</keyword>
<keyword id="KW-0963">Cytoplasm</keyword>
<keyword id="KW-0903">Direct protein sequencing</keyword>
<keyword id="KW-0274">FAD</keyword>
<keyword id="KW-0285">Flavoprotein</keyword>
<keyword id="KW-0408">Iron</keyword>
<keyword id="KW-0411">Iron-sulfur</keyword>
<keyword id="KW-0479">Metal-binding</keyword>
<keyword id="KW-0560">Oxidoreductase</keyword>
<keyword id="KW-1185">Reference proteome</keyword>
<keyword id="KW-0677">Repeat</keyword>
<accession>P84626</accession>
<accession>D2REQ7</accession>
<protein>
    <recommendedName>
        <fullName>Heterodisulfide reductase subunit A-like protein</fullName>
        <ecNumber>1.8.-.-</ecNumber>
    </recommendedName>
</protein>
<feature type="chain" id="PRO_0000150063" description="Heterodisulfide reductase subunit A-like protein">
    <location>
        <begin position="1"/>
        <end position="701"/>
    </location>
</feature>
<feature type="domain" description="4Fe-4S ferredoxin-type 1" evidence="2">
    <location>
        <begin position="239"/>
        <end position="268"/>
    </location>
</feature>
<feature type="domain" description="4Fe-4S ferredoxin-type 2" evidence="2">
    <location>
        <begin position="618"/>
        <end position="647"/>
    </location>
</feature>
<feature type="domain" description="4Fe-4S ferredoxin-type 3" evidence="2">
    <location>
        <begin position="651"/>
        <end position="680"/>
    </location>
</feature>
<feature type="binding site" evidence="1">
    <location>
        <begin position="152"/>
        <end position="175"/>
    </location>
    <ligand>
        <name>FAD</name>
        <dbReference type="ChEBI" id="CHEBI:57692"/>
    </ligand>
</feature>
<feature type="binding site" evidence="1">
    <location>
        <position position="248"/>
    </location>
    <ligand>
        <name>[4Fe-4S] cluster</name>
        <dbReference type="ChEBI" id="CHEBI:49883"/>
        <label>1</label>
    </ligand>
</feature>
<feature type="binding site" evidence="1">
    <location>
        <position position="251"/>
    </location>
    <ligand>
        <name>[4Fe-4S] cluster</name>
        <dbReference type="ChEBI" id="CHEBI:49883"/>
        <label>1</label>
    </ligand>
</feature>
<feature type="binding site" evidence="1">
    <location>
        <position position="254"/>
    </location>
    <ligand>
        <name>[4Fe-4S] cluster</name>
        <dbReference type="ChEBI" id="CHEBI:49883"/>
        <label>1</label>
    </ligand>
</feature>
<feature type="binding site" evidence="1">
    <location>
        <position position="326"/>
    </location>
    <ligand>
        <name>[4Fe-4S] cluster</name>
        <dbReference type="ChEBI" id="CHEBI:49883"/>
        <label>1</label>
    </ligand>
</feature>
<feature type="binding site" evidence="1">
    <location>
        <position position="627"/>
    </location>
    <ligand>
        <name>[4Fe-4S] cluster</name>
        <dbReference type="ChEBI" id="CHEBI:49883"/>
        <label>2</label>
    </ligand>
</feature>
<feature type="binding site" evidence="1">
    <location>
        <position position="630"/>
    </location>
    <ligand>
        <name>[4Fe-4S] cluster</name>
        <dbReference type="ChEBI" id="CHEBI:49883"/>
        <label>2</label>
    </ligand>
</feature>
<feature type="binding site" evidence="1">
    <location>
        <position position="633"/>
    </location>
    <ligand>
        <name>[4Fe-4S] cluster</name>
        <dbReference type="ChEBI" id="CHEBI:49883"/>
        <label>2</label>
    </ligand>
</feature>
<feature type="binding site" evidence="1">
    <location>
        <position position="637"/>
    </location>
    <ligand>
        <name>[4Fe-4S] cluster</name>
        <dbReference type="ChEBI" id="CHEBI:49883"/>
        <label>3</label>
    </ligand>
</feature>
<feature type="binding site" evidence="1">
    <location>
        <position position="660"/>
    </location>
    <ligand>
        <name>[4Fe-4S] cluster</name>
        <dbReference type="ChEBI" id="CHEBI:49883"/>
        <label>3</label>
    </ligand>
</feature>
<feature type="binding site" evidence="1">
    <location>
        <position position="663"/>
    </location>
    <ligand>
        <name>[4Fe-4S] cluster</name>
        <dbReference type="ChEBI" id="CHEBI:49883"/>
        <label>3</label>
    </ligand>
</feature>
<feature type="binding site" evidence="1">
    <location>
        <position position="666"/>
    </location>
    <ligand>
        <name>[4Fe-4S] cluster</name>
        <dbReference type="ChEBI" id="CHEBI:49883"/>
        <label>3</label>
    </ligand>
</feature>
<feature type="binding site" evidence="1">
    <location>
        <position position="670"/>
    </location>
    <ligand>
        <name>[4Fe-4S] cluster</name>
        <dbReference type="ChEBI" id="CHEBI:49883"/>
        <label>2</label>
    </ligand>
</feature>
<feature type="sequence conflict" description="In Ref. 2; AA sequence." evidence="4" ref="2">
    <original>A</original>
    <variation>G</variation>
    <location>
        <position position="2"/>
    </location>
</feature>